<name>PAEA_ECOL6</name>
<dbReference type="EMBL" id="AE014075">
    <property type="protein sequence ID" value="AAN83737.1"/>
    <property type="molecule type" value="Genomic_DNA"/>
</dbReference>
<dbReference type="RefSeq" id="WP_000935036.1">
    <property type="nucleotide sequence ID" value="NZ_CP051263.1"/>
</dbReference>
<dbReference type="SMR" id="P0AE46"/>
<dbReference type="STRING" id="199310.c5316"/>
<dbReference type="KEGG" id="ecc:c5316"/>
<dbReference type="eggNOG" id="COG1253">
    <property type="taxonomic scope" value="Bacteria"/>
</dbReference>
<dbReference type="HOGENOM" id="CLU_015237_4_0_6"/>
<dbReference type="BioCyc" id="ECOL199310:C5316-MONOMER"/>
<dbReference type="Proteomes" id="UP000001410">
    <property type="component" value="Chromosome"/>
</dbReference>
<dbReference type="GO" id="GO:0005886">
    <property type="term" value="C:plasma membrane"/>
    <property type="evidence" value="ECO:0007669"/>
    <property type="project" value="UniProtKB-SubCell"/>
</dbReference>
<dbReference type="GO" id="GO:0050660">
    <property type="term" value="F:flavin adenine dinucleotide binding"/>
    <property type="evidence" value="ECO:0007669"/>
    <property type="project" value="InterPro"/>
</dbReference>
<dbReference type="CDD" id="cd04590">
    <property type="entry name" value="CBS_pair_CorC_HlyC_assoc"/>
    <property type="match status" value="1"/>
</dbReference>
<dbReference type="FunFam" id="3.10.580.10:FF:000005">
    <property type="entry name" value="HlyC/CorC family transporter"/>
    <property type="match status" value="1"/>
</dbReference>
<dbReference type="FunFam" id="3.30.465.10:FF:000002">
    <property type="entry name" value="HlyC/CorC family transporter"/>
    <property type="match status" value="1"/>
</dbReference>
<dbReference type="Gene3D" id="3.30.465.10">
    <property type="match status" value="1"/>
</dbReference>
<dbReference type="Gene3D" id="3.10.580.10">
    <property type="entry name" value="CBS-domain"/>
    <property type="match status" value="1"/>
</dbReference>
<dbReference type="InterPro" id="IPR000644">
    <property type="entry name" value="CBS_dom"/>
</dbReference>
<dbReference type="InterPro" id="IPR046342">
    <property type="entry name" value="CBS_dom_sf"/>
</dbReference>
<dbReference type="InterPro" id="IPR002550">
    <property type="entry name" value="CNNM"/>
</dbReference>
<dbReference type="InterPro" id="IPR036318">
    <property type="entry name" value="FAD-bd_PCMH-like_sf"/>
</dbReference>
<dbReference type="InterPro" id="IPR016169">
    <property type="entry name" value="FAD-bd_PCMH_sub2"/>
</dbReference>
<dbReference type="InterPro" id="IPR044751">
    <property type="entry name" value="Ion_transp-like_CBS"/>
</dbReference>
<dbReference type="InterPro" id="IPR005170">
    <property type="entry name" value="Transptr-assoc_dom"/>
</dbReference>
<dbReference type="PANTHER" id="PTHR22777">
    <property type="entry name" value="HEMOLYSIN-RELATED"/>
    <property type="match status" value="1"/>
</dbReference>
<dbReference type="PANTHER" id="PTHR22777:SF16">
    <property type="entry name" value="POLYAMINE EXPORT PROTEIN"/>
    <property type="match status" value="1"/>
</dbReference>
<dbReference type="Pfam" id="PF00571">
    <property type="entry name" value="CBS"/>
    <property type="match status" value="1"/>
</dbReference>
<dbReference type="Pfam" id="PF01595">
    <property type="entry name" value="CNNM"/>
    <property type="match status" value="1"/>
</dbReference>
<dbReference type="Pfam" id="PF03471">
    <property type="entry name" value="CorC_HlyC"/>
    <property type="match status" value="1"/>
</dbReference>
<dbReference type="SMART" id="SM01091">
    <property type="entry name" value="CorC_HlyC"/>
    <property type="match status" value="1"/>
</dbReference>
<dbReference type="SUPFAM" id="SSF54631">
    <property type="entry name" value="CBS-domain pair"/>
    <property type="match status" value="1"/>
</dbReference>
<dbReference type="SUPFAM" id="SSF56176">
    <property type="entry name" value="FAD-binding/transporter-associated domain-like"/>
    <property type="match status" value="1"/>
</dbReference>
<dbReference type="PROSITE" id="PS51371">
    <property type="entry name" value="CBS"/>
    <property type="match status" value="2"/>
</dbReference>
<dbReference type="PROSITE" id="PS51846">
    <property type="entry name" value="CNNM"/>
    <property type="match status" value="1"/>
</dbReference>
<protein>
    <recommendedName>
        <fullName evidence="1">Polyamine export protein</fullName>
    </recommendedName>
</protein>
<comment type="function">
    <text evidence="1">Involved in cadaverine and putrescine tolerance in stationary phase. May facilitate the efflux of both cadaverine and putrescine from the cytoplasm, reducing potentially toxic levels under certain stress conditions.</text>
</comment>
<comment type="subcellular location">
    <subcellularLocation>
        <location evidence="2">Cell inner membrane</location>
        <topology evidence="3">Multi-pass membrane protein</topology>
    </subcellularLocation>
</comment>
<comment type="similarity">
    <text evidence="6">Belongs to the UPF0053 family. PaeA subfamily.</text>
</comment>
<organism>
    <name type="scientific">Escherichia coli O6:H1 (strain CFT073 / ATCC 700928 / UPEC)</name>
    <dbReference type="NCBI Taxonomy" id="199310"/>
    <lineage>
        <taxon>Bacteria</taxon>
        <taxon>Pseudomonadati</taxon>
        <taxon>Pseudomonadota</taxon>
        <taxon>Gammaproteobacteria</taxon>
        <taxon>Enterobacterales</taxon>
        <taxon>Enterobacteriaceae</taxon>
        <taxon>Escherichia</taxon>
    </lineage>
</organism>
<accession>P0AE46</accession>
<accession>P39319</accession>
<proteinExistence type="inferred from homology"/>
<keyword id="KW-0129">CBS domain</keyword>
<keyword id="KW-0997">Cell inner membrane</keyword>
<keyword id="KW-1003">Cell membrane</keyword>
<keyword id="KW-0472">Membrane</keyword>
<keyword id="KW-1185">Reference proteome</keyword>
<keyword id="KW-0677">Repeat</keyword>
<keyword id="KW-0812">Transmembrane</keyword>
<keyword id="KW-1133">Transmembrane helix</keyword>
<keyword id="KW-0813">Transport</keyword>
<reference key="1">
    <citation type="journal article" date="2002" name="Proc. Natl. Acad. Sci. U.S.A.">
        <title>Extensive mosaic structure revealed by the complete genome sequence of uropathogenic Escherichia coli.</title>
        <authorList>
            <person name="Welch R.A."/>
            <person name="Burland V."/>
            <person name="Plunkett G. III"/>
            <person name="Redford P."/>
            <person name="Roesch P."/>
            <person name="Rasko D."/>
            <person name="Buckles E.L."/>
            <person name="Liou S.-R."/>
            <person name="Boutin A."/>
            <person name="Hackett J."/>
            <person name="Stroud D."/>
            <person name="Mayhew G.F."/>
            <person name="Rose D.J."/>
            <person name="Zhou S."/>
            <person name="Schwartz D.C."/>
            <person name="Perna N.T."/>
            <person name="Mobley H.L.T."/>
            <person name="Donnenberg M.S."/>
            <person name="Blattner F.R."/>
        </authorList>
    </citation>
    <scope>NUCLEOTIDE SEQUENCE [LARGE SCALE GENOMIC DNA]</scope>
    <source>
        <strain>CFT073 / ATCC 700928 / UPEC</strain>
    </source>
</reference>
<sequence>MLNSILVILCLIAVSAFFSMSEISLAASRKIKLKLLADEGNINAQRVLNMQENPGMFFTVVQIGLNAVAILGGIVGDAAFSPAFHSLFSRYMSAELSEQLSFILSFSLVTGMFILFADLTPKRIGMIAPEAVALRIINPMRFCLYVCTPLVWFFNGLANIIFRIFKLPMVRKDDITSDDIYAVVEAGALAGVLRKQEHELIENVFELESRTVPSSMTPRENVIWFDLHEDEQSLKNKVAEHPHSKFLVCNEDIDHIIGYVDSKDLLNRVLANQSLALNSGVQIRNTLIVPDTLTLSEALESFKTAGEDFAVIMNEYALVVGIITLNDVMTTLMGDLVGQGLEEQIVARDENSWLIDGGTPIDDVMRVLDIDEFPQSGNYETIGGFMMFMLRKIPKRTDSVKFAGYKFEVVDIDNYRIDQLLVTRIDSKATALSPKLPDAKDKEESVA</sequence>
<gene>
    <name evidence="1" type="primary">paeA</name>
    <name type="synonym">ytfL</name>
    <name type="ordered locus">c5316</name>
</gene>
<feature type="chain" id="PRO_0000088364" description="Polyamine export protein">
    <location>
        <begin position="1"/>
        <end position="447"/>
    </location>
</feature>
<feature type="topological domain" description="Cytoplasmic" evidence="6">
    <location>
        <begin position="1"/>
        <end position="4"/>
    </location>
</feature>
<feature type="transmembrane region" description="Helical" evidence="3">
    <location>
        <begin position="5"/>
        <end position="25"/>
    </location>
</feature>
<feature type="topological domain" description="Periplasmic" evidence="6">
    <location>
        <begin position="26"/>
        <end position="54"/>
    </location>
</feature>
<feature type="transmembrane region" description="Helical" evidence="3">
    <location>
        <begin position="55"/>
        <end position="75"/>
    </location>
</feature>
<feature type="topological domain" description="Cytoplasmic" evidence="6">
    <location>
        <begin position="76"/>
        <end position="99"/>
    </location>
</feature>
<feature type="transmembrane region" description="Helical" evidence="3">
    <location>
        <begin position="100"/>
        <end position="120"/>
    </location>
</feature>
<feature type="topological domain" description="Periplasmic" evidence="6">
    <location>
        <begin position="121"/>
        <end position="141"/>
    </location>
</feature>
<feature type="transmembrane region" description="Helical" evidence="3">
    <location>
        <begin position="142"/>
        <end position="162"/>
    </location>
</feature>
<feature type="topological domain" description="Cytoplasmic" evidence="2">
    <location>
        <begin position="163"/>
        <end position="447"/>
    </location>
</feature>
<feature type="domain" description="CNNM transmembrane" evidence="5">
    <location>
        <begin position="1"/>
        <end position="197"/>
    </location>
</feature>
<feature type="domain" description="CBS 1" evidence="4">
    <location>
        <begin position="216"/>
        <end position="275"/>
    </location>
</feature>
<feature type="domain" description="CBS 2" evidence="4">
    <location>
        <begin position="282"/>
        <end position="343"/>
    </location>
</feature>
<evidence type="ECO:0000250" key="1">
    <source>
        <dbReference type="UniProtKB" id="A0A0F6BAS6"/>
    </source>
</evidence>
<evidence type="ECO:0000250" key="2">
    <source>
        <dbReference type="UniProtKB" id="P0AE45"/>
    </source>
</evidence>
<evidence type="ECO:0000255" key="3"/>
<evidence type="ECO:0000255" key="4">
    <source>
        <dbReference type="PROSITE-ProRule" id="PRU00703"/>
    </source>
</evidence>
<evidence type="ECO:0000255" key="5">
    <source>
        <dbReference type="PROSITE-ProRule" id="PRU01193"/>
    </source>
</evidence>
<evidence type="ECO:0000305" key="6"/>